<keyword id="KW-0997">Cell inner membrane</keyword>
<keyword id="KW-1003">Cell membrane</keyword>
<keyword id="KW-0472">Membrane</keyword>
<keyword id="KW-0812">Transmembrane</keyword>
<keyword id="KW-1133">Transmembrane helix</keyword>
<sequence>MSDKTPRKPTAFRLEQPARVSAASEQEEPRRPRAVKDLEQITPQADVFDLTDDEAAELEILDPAFEAPERKGWSLSRILFGALGILVSFAIGIWTEDLIRALFARADWLGWTALGVAMVALAAFAAIILRELVALRRLASVQHLRKDAADAAERDDMAAARKAVDALRTIAAGIPETAKGRQLLDSLTDDIIDGRDLIRLAETEILRPLDREARTLVLNASKRVSIVTAISPRALVDIGYVIFESTRLIRRLSQLYGGRPGTLGFIKFARRVIAHLAVTGTIAMGDSVIQQLVGHGLASRLSAKLGEGVVNGLMTARIGIAAMDVVRPFPFNAEKRPGIGDFIGDLARLNSDRNARK</sequence>
<protein>
    <recommendedName>
        <fullName evidence="1">UPF0283 membrane protein BruAb1_1038</fullName>
    </recommendedName>
</protein>
<comment type="subcellular location">
    <subcellularLocation>
        <location evidence="1">Cell inner membrane</location>
        <topology evidence="1">Multi-pass membrane protein</topology>
    </subcellularLocation>
</comment>
<comment type="similarity">
    <text evidence="1">Belongs to the UPF0283 family.</text>
</comment>
<dbReference type="EMBL" id="AE017223">
    <property type="protein sequence ID" value="AAX74387.1"/>
    <property type="molecule type" value="Genomic_DNA"/>
</dbReference>
<dbReference type="RefSeq" id="WP_002964151.1">
    <property type="nucleotide sequence ID" value="NC_006932.1"/>
</dbReference>
<dbReference type="SMR" id="Q57D97"/>
<dbReference type="EnsemblBacteria" id="AAX74387">
    <property type="protein sequence ID" value="AAX74387"/>
    <property type="gene ID" value="BruAb1_1038"/>
</dbReference>
<dbReference type="KEGG" id="bmb:BruAb1_1038"/>
<dbReference type="HOGENOM" id="CLU_057693_1_0_5"/>
<dbReference type="Proteomes" id="UP000000540">
    <property type="component" value="Chromosome I"/>
</dbReference>
<dbReference type="GO" id="GO:0005886">
    <property type="term" value="C:plasma membrane"/>
    <property type="evidence" value="ECO:0007669"/>
    <property type="project" value="UniProtKB-SubCell"/>
</dbReference>
<dbReference type="HAMAP" id="MF_01085">
    <property type="entry name" value="UPF0283"/>
    <property type="match status" value="1"/>
</dbReference>
<dbReference type="InterPro" id="IPR021147">
    <property type="entry name" value="DUF697"/>
</dbReference>
<dbReference type="InterPro" id="IPR006507">
    <property type="entry name" value="UPF0283"/>
</dbReference>
<dbReference type="NCBIfam" id="TIGR01620">
    <property type="entry name" value="hyp_HI0043"/>
    <property type="match status" value="1"/>
</dbReference>
<dbReference type="PANTHER" id="PTHR39342">
    <property type="entry name" value="UPF0283 MEMBRANE PROTEIN YCJF"/>
    <property type="match status" value="1"/>
</dbReference>
<dbReference type="PANTHER" id="PTHR39342:SF1">
    <property type="entry name" value="UPF0283 MEMBRANE PROTEIN YCJF"/>
    <property type="match status" value="1"/>
</dbReference>
<dbReference type="Pfam" id="PF05128">
    <property type="entry name" value="DUF697"/>
    <property type="match status" value="1"/>
</dbReference>
<accession>Q57D97</accession>
<evidence type="ECO:0000255" key="1">
    <source>
        <dbReference type="HAMAP-Rule" id="MF_01085"/>
    </source>
</evidence>
<evidence type="ECO:0000256" key="2">
    <source>
        <dbReference type="SAM" id="MobiDB-lite"/>
    </source>
</evidence>
<gene>
    <name type="ordered locus">BruAb1_1038</name>
</gene>
<reference key="1">
    <citation type="journal article" date="2005" name="J. Bacteriol.">
        <title>Completion of the genome sequence of Brucella abortus and comparison to the highly similar genomes of Brucella melitensis and Brucella suis.</title>
        <authorList>
            <person name="Halling S.M."/>
            <person name="Peterson-Burch B.D."/>
            <person name="Bricker B.J."/>
            <person name="Zuerner R.L."/>
            <person name="Qing Z."/>
            <person name="Li L.-L."/>
            <person name="Kapur V."/>
            <person name="Alt D.P."/>
            <person name="Olsen S.C."/>
        </authorList>
    </citation>
    <scope>NUCLEOTIDE SEQUENCE [LARGE SCALE GENOMIC DNA]</scope>
    <source>
        <strain>9-941</strain>
    </source>
</reference>
<name>Y1038_BRUAB</name>
<proteinExistence type="inferred from homology"/>
<organism>
    <name type="scientific">Brucella abortus biovar 1 (strain 9-941)</name>
    <dbReference type="NCBI Taxonomy" id="262698"/>
    <lineage>
        <taxon>Bacteria</taxon>
        <taxon>Pseudomonadati</taxon>
        <taxon>Pseudomonadota</taxon>
        <taxon>Alphaproteobacteria</taxon>
        <taxon>Hyphomicrobiales</taxon>
        <taxon>Brucellaceae</taxon>
        <taxon>Brucella/Ochrobactrum group</taxon>
        <taxon>Brucella</taxon>
    </lineage>
</organism>
<feature type="chain" id="PRO_1000064832" description="UPF0283 membrane protein BruAb1_1038">
    <location>
        <begin position="1"/>
        <end position="357"/>
    </location>
</feature>
<feature type="transmembrane region" description="Helical" evidence="1">
    <location>
        <begin position="78"/>
        <end position="98"/>
    </location>
</feature>
<feature type="transmembrane region" description="Helical" evidence="1">
    <location>
        <begin position="109"/>
        <end position="129"/>
    </location>
</feature>
<feature type="region of interest" description="Disordered" evidence="2">
    <location>
        <begin position="1"/>
        <end position="36"/>
    </location>
</feature>
<feature type="compositionally biased region" description="Basic and acidic residues" evidence="2">
    <location>
        <begin position="27"/>
        <end position="36"/>
    </location>
</feature>